<sequence length="745" mass="79371">MSDKPRRDTGSTGTGSGRSTGQSGSNRAVGAPNPGTGRSPNASTGGNRSAGNQAGNSGRPASAGRNQATTPAPNRNTPPAGARQGGAANARTGTPPVARGGGGGVTPPTGRGGNNPRAARNQPRSRQQPEEREREHVLRRPPPQPAARPVVRPRGPVALPPVMTVRELSEATGIGAADILKAMLKAGMLANINQQIDYETAALIMADFGIETTEDVPEQMAGIVEDVKEVLRAQPPEEMRPRPPVVTIMGHVDHGKTKLLDAIRSTRVAEGEAGGITQHIGAYQIEVNHRKITFLDTPGHEAFTAMRARGAQVTDIVVLVVAADDGVKPQTEEAIAHVKAAGVPMIVAINKIDLPTANPDRIKQQLANVGVIVEEYGGNVPCVHVSARQKINIDGLLEMILLVADLEDLRANPNAPAVGTIIEAKLDKSRGPVATVLIQNGTLHLEDNVLVGCVAGKIKSMFSDSGKRLRHAEPSTPVEIVGLEGVPQAGDILQVMDDLVVAREIALQRQRQQRAEVMAAAARGTSLEELFGKVKQGQVKELNLILKADVQGSLDAIAHLIEQLNQSQQAVQTRIIHRGVGAITEGDVNLALASHAIIIGFNARPDPAARRHAEQHGIDIRFYNIIYQLQDDLKKAMAGMLAPTVKEVVEGYAEVRNTFRLPTREVVAGVYVSDGKITRTGQNVRVLRRGVVIHDGKISSLKRFKDDVREVTAGYECGLIVEGFNDIEVGDALEFYRQETVAASL</sequence>
<evidence type="ECO:0000250" key="1"/>
<evidence type="ECO:0000255" key="2">
    <source>
        <dbReference type="HAMAP-Rule" id="MF_00100"/>
    </source>
</evidence>
<evidence type="ECO:0000256" key="3">
    <source>
        <dbReference type="SAM" id="MobiDB-lite"/>
    </source>
</evidence>
<protein>
    <recommendedName>
        <fullName evidence="2">Translation initiation factor IF-2</fullName>
    </recommendedName>
</protein>
<organism>
    <name type="scientific">Chloroflexus aurantiacus (strain ATCC 29364 / DSM 637 / Y-400-fl)</name>
    <dbReference type="NCBI Taxonomy" id="480224"/>
    <lineage>
        <taxon>Bacteria</taxon>
        <taxon>Bacillati</taxon>
        <taxon>Chloroflexota</taxon>
        <taxon>Chloroflexia</taxon>
        <taxon>Chloroflexales</taxon>
        <taxon>Chloroflexineae</taxon>
        <taxon>Chloroflexaceae</taxon>
        <taxon>Chloroflexus</taxon>
    </lineage>
</organism>
<keyword id="KW-0963">Cytoplasm</keyword>
<keyword id="KW-0342">GTP-binding</keyword>
<keyword id="KW-0396">Initiation factor</keyword>
<keyword id="KW-0547">Nucleotide-binding</keyword>
<keyword id="KW-0648">Protein biosynthesis</keyword>
<name>IF2_CHLSY</name>
<accession>B9LBJ2</accession>
<comment type="function">
    <text evidence="2">One of the essential components for the initiation of protein synthesis. Protects formylmethionyl-tRNA from spontaneous hydrolysis and promotes its binding to the 30S ribosomal subunits. Also involved in the hydrolysis of GTP during the formation of the 70S ribosomal complex.</text>
</comment>
<comment type="subcellular location">
    <subcellularLocation>
        <location evidence="2">Cytoplasm</location>
    </subcellularLocation>
</comment>
<comment type="similarity">
    <text evidence="2">Belongs to the TRAFAC class translation factor GTPase superfamily. Classic translation factor GTPase family. IF-2 subfamily.</text>
</comment>
<feature type="chain" id="PRO_1000202766" description="Translation initiation factor IF-2">
    <location>
        <begin position="1"/>
        <end position="745"/>
    </location>
</feature>
<feature type="domain" description="tr-type G">
    <location>
        <begin position="241"/>
        <end position="410"/>
    </location>
</feature>
<feature type="region of interest" description="Disordered" evidence="3">
    <location>
        <begin position="1"/>
        <end position="154"/>
    </location>
</feature>
<feature type="region of interest" description="G1" evidence="1">
    <location>
        <begin position="250"/>
        <end position="257"/>
    </location>
</feature>
<feature type="region of interest" description="G2" evidence="1">
    <location>
        <begin position="275"/>
        <end position="279"/>
    </location>
</feature>
<feature type="region of interest" description="G3" evidence="1">
    <location>
        <begin position="296"/>
        <end position="299"/>
    </location>
</feature>
<feature type="region of interest" description="G4" evidence="1">
    <location>
        <begin position="350"/>
        <end position="353"/>
    </location>
</feature>
<feature type="region of interest" description="G5" evidence="1">
    <location>
        <begin position="386"/>
        <end position="388"/>
    </location>
</feature>
<feature type="compositionally biased region" description="Polar residues" evidence="3">
    <location>
        <begin position="36"/>
        <end position="56"/>
    </location>
</feature>
<feature type="compositionally biased region" description="Low complexity" evidence="3">
    <location>
        <begin position="68"/>
        <end position="98"/>
    </location>
</feature>
<feature type="compositionally biased region" description="Gly residues" evidence="3">
    <location>
        <begin position="99"/>
        <end position="113"/>
    </location>
</feature>
<feature type="compositionally biased region" description="Low complexity" evidence="3">
    <location>
        <begin position="114"/>
        <end position="126"/>
    </location>
</feature>
<feature type="compositionally biased region" description="Basic and acidic residues" evidence="3">
    <location>
        <begin position="127"/>
        <end position="138"/>
    </location>
</feature>
<feature type="binding site" evidence="2">
    <location>
        <begin position="250"/>
        <end position="257"/>
    </location>
    <ligand>
        <name>GTP</name>
        <dbReference type="ChEBI" id="CHEBI:37565"/>
    </ligand>
</feature>
<feature type="binding site" evidence="2">
    <location>
        <begin position="296"/>
        <end position="300"/>
    </location>
    <ligand>
        <name>GTP</name>
        <dbReference type="ChEBI" id="CHEBI:37565"/>
    </ligand>
</feature>
<feature type="binding site" evidence="2">
    <location>
        <begin position="350"/>
        <end position="353"/>
    </location>
    <ligand>
        <name>GTP</name>
        <dbReference type="ChEBI" id="CHEBI:37565"/>
    </ligand>
</feature>
<reference key="1">
    <citation type="submission" date="2009-01" db="EMBL/GenBank/DDBJ databases">
        <title>Complete sequence of Chloroflexus sp. Y-400-fl.</title>
        <authorList>
            <consortium name="US DOE Joint Genome Institute"/>
            <person name="Lucas S."/>
            <person name="Copeland A."/>
            <person name="Lapidus A."/>
            <person name="Glavina del Rio T."/>
            <person name="Dalin E."/>
            <person name="Tice H."/>
            <person name="Bruce D."/>
            <person name="Goodwin L."/>
            <person name="Pitluck S."/>
            <person name="Sims D."/>
            <person name="Kiss H."/>
            <person name="Brettin T."/>
            <person name="Detter J.C."/>
            <person name="Han C."/>
            <person name="Larimer F."/>
            <person name="Land M."/>
            <person name="Hauser L."/>
            <person name="Kyrpides N."/>
            <person name="Ovchinnikova G."/>
            <person name="Bryant D.A."/>
            <person name="Richardson P."/>
        </authorList>
    </citation>
    <scope>NUCLEOTIDE SEQUENCE [LARGE SCALE GENOMIC DNA]</scope>
    <source>
        <strain>ATCC 29364 / DSM 637 / Y-400-fl</strain>
    </source>
</reference>
<gene>
    <name evidence="2" type="primary">infB</name>
    <name type="ordered locus">Chy400_3259</name>
</gene>
<dbReference type="EMBL" id="CP001364">
    <property type="protein sequence ID" value="ACM54637.1"/>
    <property type="molecule type" value="Genomic_DNA"/>
</dbReference>
<dbReference type="SMR" id="B9LBJ2"/>
<dbReference type="KEGG" id="chl:Chy400_3259"/>
<dbReference type="HOGENOM" id="CLU_006301_5_1_0"/>
<dbReference type="OrthoDB" id="9811804at2"/>
<dbReference type="GO" id="GO:0005829">
    <property type="term" value="C:cytosol"/>
    <property type="evidence" value="ECO:0007669"/>
    <property type="project" value="TreeGrafter"/>
</dbReference>
<dbReference type="GO" id="GO:0005525">
    <property type="term" value="F:GTP binding"/>
    <property type="evidence" value="ECO:0007669"/>
    <property type="project" value="UniProtKB-KW"/>
</dbReference>
<dbReference type="GO" id="GO:0003924">
    <property type="term" value="F:GTPase activity"/>
    <property type="evidence" value="ECO:0007669"/>
    <property type="project" value="UniProtKB-UniRule"/>
</dbReference>
<dbReference type="GO" id="GO:0003743">
    <property type="term" value="F:translation initiation factor activity"/>
    <property type="evidence" value="ECO:0007669"/>
    <property type="project" value="UniProtKB-UniRule"/>
</dbReference>
<dbReference type="CDD" id="cd01887">
    <property type="entry name" value="IF2_eIF5B"/>
    <property type="match status" value="1"/>
</dbReference>
<dbReference type="CDD" id="cd03702">
    <property type="entry name" value="IF2_mtIF2_II"/>
    <property type="match status" value="1"/>
</dbReference>
<dbReference type="CDD" id="cd03692">
    <property type="entry name" value="mtIF2_IVc"/>
    <property type="match status" value="1"/>
</dbReference>
<dbReference type="FunFam" id="2.40.30.10:FF:000008">
    <property type="entry name" value="Translation initiation factor IF-2"/>
    <property type="match status" value="1"/>
</dbReference>
<dbReference type="FunFam" id="2.40.30.10:FF:000054">
    <property type="entry name" value="Translation initiation factor IF-2"/>
    <property type="match status" value="1"/>
</dbReference>
<dbReference type="FunFam" id="3.40.50.10050:FF:000001">
    <property type="entry name" value="Translation initiation factor IF-2"/>
    <property type="match status" value="1"/>
</dbReference>
<dbReference type="FunFam" id="3.40.50.300:FF:000019">
    <property type="entry name" value="Translation initiation factor IF-2"/>
    <property type="match status" value="1"/>
</dbReference>
<dbReference type="Gene3D" id="3.40.50.300">
    <property type="entry name" value="P-loop containing nucleotide triphosphate hydrolases"/>
    <property type="match status" value="1"/>
</dbReference>
<dbReference type="Gene3D" id="2.40.30.10">
    <property type="entry name" value="Translation factors"/>
    <property type="match status" value="2"/>
</dbReference>
<dbReference type="Gene3D" id="3.40.50.10050">
    <property type="entry name" value="Translation initiation factor IF- 2, domain 3"/>
    <property type="match status" value="1"/>
</dbReference>
<dbReference type="HAMAP" id="MF_00100_B">
    <property type="entry name" value="IF_2_B"/>
    <property type="match status" value="1"/>
</dbReference>
<dbReference type="InterPro" id="IPR053905">
    <property type="entry name" value="EF-G-like_DII"/>
</dbReference>
<dbReference type="InterPro" id="IPR004161">
    <property type="entry name" value="EFTu-like_2"/>
</dbReference>
<dbReference type="InterPro" id="IPR044145">
    <property type="entry name" value="IF2_II"/>
</dbReference>
<dbReference type="InterPro" id="IPR006847">
    <property type="entry name" value="IF2_N"/>
</dbReference>
<dbReference type="InterPro" id="IPR027417">
    <property type="entry name" value="P-loop_NTPase"/>
</dbReference>
<dbReference type="InterPro" id="IPR005225">
    <property type="entry name" value="Small_GTP-bd"/>
</dbReference>
<dbReference type="InterPro" id="IPR000795">
    <property type="entry name" value="T_Tr_GTP-bd_dom"/>
</dbReference>
<dbReference type="InterPro" id="IPR000178">
    <property type="entry name" value="TF_IF2_bacterial-like"/>
</dbReference>
<dbReference type="InterPro" id="IPR015760">
    <property type="entry name" value="TIF_IF2"/>
</dbReference>
<dbReference type="InterPro" id="IPR023115">
    <property type="entry name" value="TIF_IF2_dom3"/>
</dbReference>
<dbReference type="InterPro" id="IPR036925">
    <property type="entry name" value="TIF_IF2_dom3_sf"/>
</dbReference>
<dbReference type="InterPro" id="IPR009000">
    <property type="entry name" value="Transl_B-barrel_sf"/>
</dbReference>
<dbReference type="NCBIfam" id="TIGR00487">
    <property type="entry name" value="IF-2"/>
    <property type="match status" value="1"/>
</dbReference>
<dbReference type="NCBIfam" id="TIGR00231">
    <property type="entry name" value="small_GTP"/>
    <property type="match status" value="1"/>
</dbReference>
<dbReference type="PANTHER" id="PTHR43381:SF5">
    <property type="entry name" value="TR-TYPE G DOMAIN-CONTAINING PROTEIN"/>
    <property type="match status" value="1"/>
</dbReference>
<dbReference type="PANTHER" id="PTHR43381">
    <property type="entry name" value="TRANSLATION INITIATION FACTOR IF-2-RELATED"/>
    <property type="match status" value="1"/>
</dbReference>
<dbReference type="Pfam" id="PF22042">
    <property type="entry name" value="EF-G_D2"/>
    <property type="match status" value="1"/>
</dbReference>
<dbReference type="Pfam" id="PF00009">
    <property type="entry name" value="GTP_EFTU"/>
    <property type="match status" value="1"/>
</dbReference>
<dbReference type="Pfam" id="PF03144">
    <property type="entry name" value="GTP_EFTU_D2"/>
    <property type="match status" value="1"/>
</dbReference>
<dbReference type="Pfam" id="PF11987">
    <property type="entry name" value="IF-2"/>
    <property type="match status" value="1"/>
</dbReference>
<dbReference type="Pfam" id="PF04760">
    <property type="entry name" value="IF2_N"/>
    <property type="match status" value="1"/>
</dbReference>
<dbReference type="SUPFAM" id="SSF52156">
    <property type="entry name" value="Initiation factor IF2/eIF5b, domain 3"/>
    <property type="match status" value="1"/>
</dbReference>
<dbReference type="SUPFAM" id="SSF52540">
    <property type="entry name" value="P-loop containing nucleoside triphosphate hydrolases"/>
    <property type="match status" value="1"/>
</dbReference>
<dbReference type="SUPFAM" id="SSF50447">
    <property type="entry name" value="Translation proteins"/>
    <property type="match status" value="2"/>
</dbReference>
<dbReference type="PROSITE" id="PS51722">
    <property type="entry name" value="G_TR_2"/>
    <property type="match status" value="1"/>
</dbReference>
<dbReference type="PROSITE" id="PS01176">
    <property type="entry name" value="IF2"/>
    <property type="match status" value="1"/>
</dbReference>
<proteinExistence type="inferred from homology"/>